<proteinExistence type="inferred from homology"/>
<feature type="chain" id="PRO_0000265647" description="Elongation factor 4">
    <location>
        <begin position="1"/>
        <end position="606"/>
    </location>
</feature>
<feature type="domain" description="tr-type G">
    <location>
        <begin position="11"/>
        <end position="193"/>
    </location>
</feature>
<feature type="binding site" evidence="1">
    <location>
        <begin position="23"/>
        <end position="28"/>
    </location>
    <ligand>
        <name>GTP</name>
        <dbReference type="ChEBI" id="CHEBI:37565"/>
    </ligand>
</feature>
<feature type="binding site" evidence="1">
    <location>
        <begin position="140"/>
        <end position="143"/>
    </location>
    <ligand>
        <name>GTP</name>
        <dbReference type="ChEBI" id="CHEBI:37565"/>
    </ligand>
</feature>
<name>LEPA_CHRSD</name>
<dbReference type="EC" id="3.6.5.n1" evidence="1"/>
<dbReference type="EMBL" id="CP000285">
    <property type="protein sequence ID" value="ABE58982.1"/>
    <property type="molecule type" value="Genomic_DNA"/>
</dbReference>
<dbReference type="RefSeq" id="WP_011506928.1">
    <property type="nucleotide sequence ID" value="NC_007963.1"/>
</dbReference>
<dbReference type="SMR" id="Q1QX26"/>
<dbReference type="STRING" id="290398.Csal_1629"/>
<dbReference type="GeneID" id="95334360"/>
<dbReference type="KEGG" id="csa:Csal_1629"/>
<dbReference type="eggNOG" id="COG0481">
    <property type="taxonomic scope" value="Bacteria"/>
</dbReference>
<dbReference type="HOGENOM" id="CLU_009995_3_3_6"/>
<dbReference type="OrthoDB" id="9801472at2"/>
<dbReference type="Proteomes" id="UP000000239">
    <property type="component" value="Chromosome"/>
</dbReference>
<dbReference type="GO" id="GO:0005886">
    <property type="term" value="C:plasma membrane"/>
    <property type="evidence" value="ECO:0007669"/>
    <property type="project" value="UniProtKB-SubCell"/>
</dbReference>
<dbReference type="GO" id="GO:0005525">
    <property type="term" value="F:GTP binding"/>
    <property type="evidence" value="ECO:0007669"/>
    <property type="project" value="UniProtKB-UniRule"/>
</dbReference>
<dbReference type="GO" id="GO:0003924">
    <property type="term" value="F:GTPase activity"/>
    <property type="evidence" value="ECO:0007669"/>
    <property type="project" value="UniProtKB-UniRule"/>
</dbReference>
<dbReference type="GO" id="GO:0097216">
    <property type="term" value="F:guanosine tetraphosphate binding"/>
    <property type="evidence" value="ECO:0007669"/>
    <property type="project" value="UniProtKB-ARBA"/>
</dbReference>
<dbReference type="GO" id="GO:0043022">
    <property type="term" value="F:ribosome binding"/>
    <property type="evidence" value="ECO:0007669"/>
    <property type="project" value="UniProtKB-UniRule"/>
</dbReference>
<dbReference type="GO" id="GO:0003746">
    <property type="term" value="F:translation elongation factor activity"/>
    <property type="evidence" value="ECO:0007669"/>
    <property type="project" value="UniProtKB-UniRule"/>
</dbReference>
<dbReference type="GO" id="GO:0045727">
    <property type="term" value="P:positive regulation of translation"/>
    <property type="evidence" value="ECO:0007669"/>
    <property type="project" value="UniProtKB-UniRule"/>
</dbReference>
<dbReference type="CDD" id="cd03699">
    <property type="entry name" value="EF4_II"/>
    <property type="match status" value="1"/>
</dbReference>
<dbReference type="CDD" id="cd16260">
    <property type="entry name" value="EF4_III"/>
    <property type="match status" value="1"/>
</dbReference>
<dbReference type="CDD" id="cd01890">
    <property type="entry name" value="LepA"/>
    <property type="match status" value="1"/>
</dbReference>
<dbReference type="CDD" id="cd03709">
    <property type="entry name" value="lepA_C"/>
    <property type="match status" value="1"/>
</dbReference>
<dbReference type="FunFam" id="3.40.50.300:FF:000078">
    <property type="entry name" value="Elongation factor 4"/>
    <property type="match status" value="1"/>
</dbReference>
<dbReference type="FunFam" id="2.40.30.10:FF:000015">
    <property type="entry name" value="Translation factor GUF1, mitochondrial"/>
    <property type="match status" value="1"/>
</dbReference>
<dbReference type="FunFam" id="3.30.70.240:FF:000007">
    <property type="entry name" value="Translation factor GUF1, mitochondrial"/>
    <property type="match status" value="1"/>
</dbReference>
<dbReference type="FunFam" id="3.30.70.2570:FF:000001">
    <property type="entry name" value="Translation factor GUF1, mitochondrial"/>
    <property type="match status" value="1"/>
</dbReference>
<dbReference type="FunFam" id="3.30.70.870:FF:000004">
    <property type="entry name" value="Translation factor GUF1, mitochondrial"/>
    <property type="match status" value="1"/>
</dbReference>
<dbReference type="Gene3D" id="3.30.70.240">
    <property type="match status" value="1"/>
</dbReference>
<dbReference type="Gene3D" id="3.30.70.2570">
    <property type="entry name" value="Elongation factor 4, C-terminal domain"/>
    <property type="match status" value="1"/>
</dbReference>
<dbReference type="Gene3D" id="3.30.70.870">
    <property type="entry name" value="Elongation Factor G (Translational Gtpase), domain 3"/>
    <property type="match status" value="1"/>
</dbReference>
<dbReference type="Gene3D" id="3.40.50.300">
    <property type="entry name" value="P-loop containing nucleotide triphosphate hydrolases"/>
    <property type="match status" value="1"/>
</dbReference>
<dbReference type="Gene3D" id="2.40.30.10">
    <property type="entry name" value="Translation factors"/>
    <property type="match status" value="1"/>
</dbReference>
<dbReference type="HAMAP" id="MF_00071">
    <property type="entry name" value="LepA"/>
    <property type="match status" value="1"/>
</dbReference>
<dbReference type="InterPro" id="IPR006297">
    <property type="entry name" value="EF-4"/>
</dbReference>
<dbReference type="InterPro" id="IPR035647">
    <property type="entry name" value="EFG_III/V"/>
</dbReference>
<dbReference type="InterPro" id="IPR000640">
    <property type="entry name" value="EFG_V-like"/>
</dbReference>
<dbReference type="InterPro" id="IPR004161">
    <property type="entry name" value="EFTu-like_2"/>
</dbReference>
<dbReference type="InterPro" id="IPR031157">
    <property type="entry name" value="G_TR_CS"/>
</dbReference>
<dbReference type="InterPro" id="IPR038363">
    <property type="entry name" value="LepA_C_sf"/>
</dbReference>
<dbReference type="InterPro" id="IPR013842">
    <property type="entry name" value="LepA_CTD"/>
</dbReference>
<dbReference type="InterPro" id="IPR035654">
    <property type="entry name" value="LepA_IV"/>
</dbReference>
<dbReference type="InterPro" id="IPR027417">
    <property type="entry name" value="P-loop_NTPase"/>
</dbReference>
<dbReference type="InterPro" id="IPR005225">
    <property type="entry name" value="Small_GTP-bd"/>
</dbReference>
<dbReference type="InterPro" id="IPR000795">
    <property type="entry name" value="T_Tr_GTP-bd_dom"/>
</dbReference>
<dbReference type="InterPro" id="IPR009000">
    <property type="entry name" value="Transl_B-barrel_sf"/>
</dbReference>
<dbReference type="NCBIfam" id="TIGR01393">
    <property type="entry name" value="lepA"/>
    <property type="match status" value="1"/>
</dbReference>
<dbReference type="NCBIfam" id="TIGR00231">
    <property type="entry name" value="small_GTP"/>
    <property type="match status" value="1"/>
</dbReference>
<dbReference type="PANTHER" id="PTHR43512:SF4">
    <property type="entry name" value="TRANSLATION FACTOR GUF1 HOMOLOG, CHLOROPLASTIC"/>
    <property type="match status" value="1"/>
</dbReference>
<dbReference type="PANTHER" id="PTHR43512">
    <property type="entry name" value="TRANSLATION FACTOR GUF1-RELATED"/>
    <property type="match status" value="1"/>
</dbReference>
<dbReference type="Pfam" id="PF00679">
    <property type="entry name" value="EFG_C"/>
    <property type="match status" value="1"/>
</dbReference>
<dbReference type="Pfam" id="PF00009">
    <property type="entry name" value="GTP_EFTU"/>
    <property type="match status" value="1"/>
</dbReference>
<dbReference type="Pfam" id="PF03144">
    <property type="entry name" value="GTP_EFTU_D2"/>
    <property type="match status" value="1"/>
</dbReference>
<dbReference type="Pfam" id="PF06421">
    <property type="entry name" value="LepA_C"/>
    <property type="match status" value="1"/>
</dbReference>
<dbReference type="PRINTS" id="PR00315">
    <property type="entry name" value="ELONGATNFCT"/>
</dbReference>
<dbReference type="SMART" id="SM00838">
    <property type="entry name" value="EFG_C"/>
    <property type="match status" value="1"/>
</dbReference>
<dbReference type="SUPFAM" id="SSF54980">
    <property type="entry name" value="EF-G C-terminal domain-like"/>
    <property type="match status" value="2"/>
</dbReference>
<dbReference type="SUPFAM" id="SSF52540">
    <property type="entry name" value="P-loop containing nucleoside triphosphate hydrolases"/>
    <property type="match status" value="1"/>
</dbReference>
<dbReference type="SUPFAM" id="SSF50447">
    <property type="entry name" value="Translation proteins"/>
    <property type="match status" value="1"/>
</dbReference>
<dbReference type="PROSITE" id="PS00301">
    <property type="entry name" value="G_TR_1"/>
    <property type="match status" value="1"/>
</dbReference>
<dbReference type="PROSITE" id="PS51722">
    <property type="entry name" value="G_TR_2"/>
    <property type="match status" value="1"/>
</dbReference>
<protein>
    <recommendedName>
        <fullName evidence="1">Elongation factor 4</fullName>
        <shortName evidence="1">EF-4</shortName>
        <ecNumber evidence="1">3.6.5.n1</ecNumber>
    </recommendedName>
    <alternativeName>
        <fullName evidence="1">Ribosomal back-translocase LepA</fullName>
    </alternativeName>
</protein>
<accession>Q1QX26</accession>
<gene>
    <name evidence="1" type="primary">lepA</name>
    <name type="ordered locus">Csal_1629</name>
</gene>
<keyword id="KW-0997">Cell inner membrane</keyword>
<keyword id="KW-1003">Cell membrane</keyword>
<keyword id="KW-0342">GTP-binding</keyword>
<keyword id="KW-0378">Hydrolase</keyword>
<keyword id="KW-0472">Membrane</keyword>
<keyword id="KW-0547">Nucleotide-binding</keyword>
<keyword id="KW-0648">Protein biosynthesis</keyword>
<keyword id="KW-1185">Reference proteome</keyword>
<comment type="function">
    <text evidence="1">Required for accurate and efficient protein synthesis under certain stress conditions. May act as a fidelity factor of the translation reaction, by catalyzing a one-codon backward translocation of tRNAs on improperly translocated ribosomes. Back-translocation proceeds from a post-translocation (POST) complex to a pre-translocation (PRE) complex, thus giving elongation factor G a second chance to translocate the tRNAs correctly. Binds to ribosomes in a GTP-dependent manner.</text>
</comment>
<comment type="catalytic activity">
    <reaction evidence="1">
        <text>GTP + H2O = GDP + phosphate + H(+)</text>
        <dbReference type="Rhea" id="RHEA:19669"/>
        <dbReference type="ChEBI" id="CHEBI:15377"/>
        <dbReference type="ChEBI" id="CHEBI:15378"/>
        <dbReference type="ChEBI" id="CHEBI:37565"/>
        <dbReference type="ChEBI" id="CHEBI:43474"/>
        <dbReference type="ChEBI" id="CHEBI:58189"/>
        <dbReference type="EC" id="3.6.5.n1"/>
    </reaction>
</comment>
<comment type="subcellular location">
    <subcellularLocation>
        <location evidence="1">Cell inner membrane</location>
        <topology evidence="1">Peripheral membrane protein</topology>
        <orientation evidence="1">Cytoplasmic side</orientation>
    </subcellularLocation>
</comment>
<comment type="similarity">
    <text evidence="1">Belongs to the TRAFAC class translation factor GTPase superfamily. Classic translation factor GTPase family. LepA subfamily.</text>
</comment>
<reference key="1">
    <citation type="journal article" date="2011" name="Stand. Genomic Sci.">
        <title>Complete genome sequence of the halophilic and highly halotolerant Chromohalobacter salexigens type strain (1H11(T)).</title>
        <authorList>
            <person name="Copeland A."/>
            <person name="O'Connor K."/>
            <person name="Lucas S."/>
            <person name="Lapidus A."/>
            <person name="Berry K.W."/>
            <person name="Detter J.C."/>
            <person name="Del Rio T.G."/>
            <person name="Hammon N."/>
            <person name="Dalin E."/>
            <person name="Tice H."/>
            <person name="Pitluck S."/>
            <person name="Bruce D."/>
            <person name="Goodwin L."/>
            <person name="Han C."/>
            <person name="Tapia R."/>
            <person name="Saunders E."/>
            <person name="Schmutz J."/>
            <person name="Brettin T."/>
            <person name="Larimer F."/>
            <person name="Land M."/>
            <person name="Hauser L."/>
            <person name="Vargas C."/>
            <person name="Nieto J.J."/>
            <person name="Kyrpides N.C."/>
            <person name="Ivanova N."/>
            <person name="Goker M."/>
            <person name="Klenk H.P."/>
            <person name="Csonka L.N."/>
            <person name="Woyke T."/>
        </authorList>
    </citation>
    <scope>NUCLEOTIDE SEQUENCE [LARGE SCALE GENOMIC DNA]</scope>
    <source>
        <strain>ATCC BAA-138 / DSM 3043 / CIP 106854 / NCIMB 13768 / 1H11</strain>
    </source>
</reference>
<organism>
    <name type="scientific">Chromohalobacter salexigens (strain ATCC BAA-138 / DSM 3043 / CIP 106854 / NCIMB 13768 / 1H11)</name>
    <dbReference type="NCBI Taxonomy" id="290398"/>
    <lineage>
        <taxon>Bacteria</taxon>
        <taxon>Pseudomonadati</taxon>
        <taxon>Pseudomonadota</taxon>
        <taxon>Gammaproteobacteria</taxon>
        <taxon>Oceanospirillales</taxon>
        <taxon>Halomonadaceae</taxon>
        <taxon>Chromohalobacter</taxon>
    </lineage>
</organism>
<sequence length="606" mass="67411">MSRDEKNATLPHIRNFSIIAHIDHGKSTLSDRIIQICGGLTERELKEQVLDSMDLERERGITIKAQSVTLDYKAEDGQVYQLNFIDTPGHVDFSYEVSRSLYACEGALLVVDAGQGVEAQSVANCYTAVEQGLEVLPVLNKMDLPQADPDRVAHEVEEIIGIDASDACRVSAKSGLGMEALLERLVRDVPPPKGDPEAPLQALIVDSWFDNYLGVISLVRLFDGTIKKGDKIRMKSTERAWEVGEVGIFTPKRKETGILRAGEVGFVVAGIKDIHGAPVGDTIVHAKGGEDVARLPGFQKVKPQVYAGMFPVSSDDYEDFRDALEKLALNDASLDYEPENSDALGFGFRVGFLGTLHMEIVQERLEREYNLDLLTTAPTVIYELAMKDGETRYVSNPSKLPDMADIEEMREPVVRASILVPQDFVGNVISECEQRRGTQLDMLFLGSQIQLTYELPMSEVVMDFFDRLKSISRGYASLEYNFERFEAAKLVRLDVLINGDRVDALATIVHRDHAHPRGRALVEKMKELIPRQMFDVAIQATLGGQVVARSTVKALRKNVTAKCYGGDVTRKRKLLEKQKAGKKRMKQVGKVEIPQDAFLAVLKMND</sequence>
<evidence type="ECO:0000255" key="1">
    <source>
        <dbReference type="HAMAP-Rule" id="MF_00071"/>
    </source>
</evidence>